<reference key="1">
    <citation type="submission" date="2003-11" db="EMBL/GenBank/DDBJ databases">
        <title>Whole genome sequence of Porphyra yezoensis chloroplast.</title>
        <authorList>
            <person name="Kunimoto M."/>
            <person name="Morishima K."/>
            <person name="Yoshikawa M."/>
            <person name="Fukuda S."/>
            <person name="Kobayashi T."/>
            <person name="Kobayashi M."/>
            <person name="Okazaki T."/>
            <person name="Ohara I."/>
            <person name="Nakayama I."/>
        </authorList>
    </citation>
    <scope>NUCLEOTIDE SEQUENCE [LARGE SCALE GENOMIC DNA]</scope>
    <source>
        <strain>U-51</strain>
    </source>
</reference>
<dbReference type="EMBL" id="AP006715">
    <property type="protein sequence ID" value="BAE92339.1"/>
    <property type="molecule type" value="Genomic_DNA"/>
</dbReference>
<dbReference type="RefSeq" id="YP_536896.1">
    <property type="nucleotide sequence ID" value="NC_007932.1"/>
</dbReference>
<dbReference type="GO" id="GO:0009507">
    <property type="term" value="C:chloroplast"/>
    <property type="evidence" value="ECO:0007669"/>
    <property type="project" value="UniProtKB-SubCell"/>
</dbReference>
<dbReference type="InterPro" id="IPR007572">
    <property type="entry name" value="Uncharacterised_Ycf20"/>
</dbReference>
<dbReference type="PANTHER" id="PTHR33787">
    <property type="match status" value="1"/>
</dbReference>
<dbReference type="PANTHER" id="PTHR33787:SF5">
    <property type="entry name" value="YCF20-LIKE PROTEIN"/>
    <property type="match status" value="1"/>
</dbReference>
<dbReference type="Pfam" id="PF04483">
    <property type="entry name" value="DUF565"/>
    <property type="match status" value="1"/>
</dbReference>
<accession>Q1XDS2</accession>
<gene>
    <name type="primary">ycf20</name>
</gene>
<organism>
    <name type="scientific">Pyropia yezoensis</name>
    <name type="common">Susabi-nori</name>
    <name type="synonym">Porphyra yezoensis</name>
    <dbReference type="NCBI Taxonomy" id="2788"/>
    <lineage>
        <taxon>Eukaryota</taxon>
        <taxon>Rhodophyta</taxon>
        <taxon>Bangiophyceae</taxon>
        <taxon>Bangiales</taxon>
        <taxon>Bangiaceae</taxon>
        <taxon>Pyropia</taxon>
    </lineage>
</organism>
<evidence type="ECO:0000305" key="1"/>
<keyword id="KW-0150">Chloroplast</keyword>
<keyword id="KW-0934">Plastid</keyword>
<name>YCF20_PYRYE</name>
<feature type="chain" id="PRO_0000277268" description="Uncharacterized protein ycf20">
    <location>
        <begin position="1"/>
        <end position="108"/>
    </location>
</feature>
<geneLocation type="chloroplast"/>
<comment type="subcellular location">
    <subcellularLocation>
        <location>Plastid</location>
        <location>Chloroplast</location>
    </subcellularLocation>
</comment>
<comment type="similarity">
    <text evidence="1">Belongs to the ycf20 family.</text>
</comment>
<protein>
    <recommendedName>
        <fullName>Uncharacterized protein ycf20</fullName>
    </recommendedName>
</protein>
<sequence>MIKTRLSTFFAYLIKNLNNKLYYSLSELTTGLISLLLGFFISTGLSTIPGQTGDWGIIAASLIVAATELTSKIVYSSHKQLNIKINLFNNFKIGITYGLFVDAFKLGS</sequence>
<proteinExistence type="inferred from homology"/>